<reference key="1">
    <citation type="journal article" date="1996" name="DNA Res.">
        <title>Prediction of the coding sequences of unidentified human genes. VI. The coding sequences of 80 new genes (KIAA0201-KIAA0280) deduced by analysis of cDNA clones from cell line KG-1 and brain.</title>
        <authorList>
            <person name="Nagase T."/>
            <person name="Seki N."/>
            <person name="Ishikawa K."/>
            <person name="Ohira M."/>
            <person name="Kawarabayasi Y."/>
            <person name="Ohara O."/>
            <person name="Tanaka A."/>
            <person name="Kotani H."/>
            <person name="Miyajima N."/>
            <person name="Nomura N."/>
        </authorList>
    </citation>
    <scope>NUCLEOTIDE SEQUENCE [LARGE SCALE MRNA] (ISOFORM 1)</scope>
    <scope>VARIANT SER-694</scope>
    <source>
        <tissue>Bone marrow</tissue>
    </source>
</reference>
<reference key="2">
    <citation type="journal article" date="2004" name="Nat. Genet.">
        <title>Complete sequencing and characterization of 21,243 full-length human cDNAs.</title>
        <authorList>
            <person name="Ota T."/>
            <person name="Suzuki Y."/>
            <person name="Nishikawa T."/>
            <person name="Otsuki T."/>
            <person name="Sugiyama T."/>
            <person name="Irie R."/>
            <person name="Wakamatsu A."/>
            <person name="Hayashi K."/>
            <person name="Sato H."/>
            <person name="Nagai K."/>
            <person name="Kimura K."/>
            <person name="Makita H."/>
            <person name="Sekine M."/>
            <person name="Obayashi M."/>
            <person name="Nishi T."/>
            <person name="Shibahara T."/>
            <person name="Tanaka T."/>
            <person name="Ishii S."/>
            <person name="Yamamoto J."/>
            <person name="Saito K."/>
            <person name="Kawai Y."/>
            <person name="Isono Y."/>
            <person name="Nakamura Y."/>
            <person name="Nagahari K."/>
            <person name="Murakami K."/>
            <person name="Yasuda T."/>
            <person name="Iwayanagi T."/>
            <person name="Wagatsuma M."/>
            <person name="Shiratori A."/>
            <person name="Sudo H."/>
            <person name="Hosoiri T."/>
            <person name="Kaku Y."/>
            <person name="Kodaira H."/>
            <person name="Kondo H."/>
            <person name="Sugawara M."/>
            <person name="Takahashi M."/>
            <person name="Kanda K."/>
            <person name="Yokoi T."/>
            <person name="Furuya T."/>
            <person name="Kikkawa E."/>
            <person name="Omura Y."/>
            <person name="Abe K."/>
            <person name="Kamihara K."/>
            <person name="Katsuta N."/>
            <person name="Sato K."/>
            <person name="Tanikawa M."/>
            <person name="Yamazaki M."/>
            <person name="Ninomiya K."/>
            <person name="Ishibashi T."/>
            <person name="Yamashita H."/>
            <person name="Murakawa K."/>
            <person name="Fujimori K."/>
            <person name="Tanai H."/>
            <person name="Kimata M."/>
            <person name="Watanabe M."/>
            <person name="Hiraoka S."/>
            <person name="Chiba Y."/>
            <person name="Ishida S."/>
            <person name="Ono Y."/>
            <person name="Takiguchi S."/>
            <person name="Watanabe S."/>
            <person name="Yosida M."/>
            <person name="Hotuta T."/>
            <person name="Kusano J."/>
            <person name="Kanehori K."/>
            <person name="Takahashi-Fujii A."/>
            <person name="Hara H."/>
            <person name="Tanase T.-O."/>
            <person name="Nomura Y."/>
            <person name="Togiya S."/>
            <person name="Komai F."/>
            <person name="Hara R."/>
            <person name="Takeuchi K."/>
            <person name="Arita M."/>
            <person name="Imose N."/>
            <person name="Musashino K."/>
            <person name="Yuuki H."/>
            <person name="Oshima A."/>
            <person name="Sasaki N."/>
            <person name="Aotsuka S."/>
            <person name="Yoshikawa Y."/>
            <person name="Matsunawa H."/>
            <person name="Ichihara T."/>
            <person name="Shiohata N."/>
            <person name="Sano S."/>
            <person name="Moriya S."/>
            <person name="Momiyama H."/>
            <person name="Satoh N."/>
            <person name="Takami S."/>
            <person name="Terashima Y."/>
            <person name="Suzuki O."/>
            <person name="Nakagawa S."/>
            <person name="Senoh A."/>
            <person name="Mizoguchi H."/>
            <person name="Goto Y."/>
            <person name="Shimizu F."/>
            <person name="Wakebe H."/>
            <person name="Hishigaki H."/>
            <person name="Watanabe T."/>
            <person name="Sugiyama A."/>
            <person name="Takemoto M."/>
            <person name="Kawakami B."/>
            <person name="Yamazaki M."/>
            <person name="Watanabe K."/>
            <person name="Kumagai A."/>
            <person name="Itakura S."/>
            <person name="Fukuzumi Y."/>
            <person name="Fujimori Y."/>
            <person name="Komiyama M."/>
            <person name="Tashiro H."/>
            <person name="Tanigami A."/>
            <person name="Fujiwara T."/>
            <person name="Ono T."/>
            <person name="Yamada K."/>
            <person name="Fujii Y."/>
            <person name="Ozaki K."/>
            <person name="Hirao M."/>
            <person name="Ohmori Y."/>
            <person name="Kawabata A."/>
            <person name="Hikiji T."/>
            <person name="Kobatake N."/>
            <person name="Inagaki H."/>
            <person name="Ikema Y."/>
            <person name="Okamoto S."/>
            <person name="Okitani R."/>
            <person name="Kawakami T."/>
            <person name="Noguchi S."/>
            <person name="Itoh T."/>
            <person name="Shigeta K."/>
            <person name="Senba T."/>
            <person name="Matsumura K."/>
            <person name="Nakajima Y."/>
            <person name="Mizuno T."/>
            <person name="Morinaga M."/>
            <person name="Sasaki M."/>
            <person name="Togashi T."/>
            <person name="Oyama M."/>
            <person name="Hata H."/>
            <person name="Watanabe M."/>
            <person name="Komatsu T."/>
            <person name="Mizushima-Sugano J."/>
            <person name="Satoh T."/>
            <person name="Shirai Y."/>
            <person name="Takahashi Y."/>
            <person name="Nakagawa K."/>
            <person name="Okumura K."/>
            <person name="Nagase T."/>
            <person name="Nomura N."/>
            <person name="Kikuchi H."/>
            <person name="Masuho Y."/>
            <person name="Yamashita R."/>
            <person name="Nakai K."/>
            <person name="Yada T."/>
            <person name="Nakamura Y."/>
            <person name="Ohara O."/>
            <person name="Isogai T."/>
            <person name="Sugano S."/>
        </authorList>
    </citation>
    <scope>NUCLEOTIDE SEQUENCE [LARGE SCALE MRNA] (ISOFORM 2)</scope>
</reference>
<reference key="3">
    <citation type="journal article" date="2003" name="Nature">
        <title>The DNA sequence and analysis of human chromosome 6.</title>
        <authorList>
            <person name="Mungall A.J."/>
            <person name="Palmer S.A."/>
            <person name="Sims S.K."/>
            <person name="Edwards C.A."/>
            <person name="Ashurst J.L."/>
            <person name="Wilming L."/>
            <person name="Jones M.C."/>
            <person name="Horton R."/>
            <person name="Hunt S.E."/>
            <person name="Scott C.E."/>
            <person name="Gilbert J.G.R."/>
            <person name="Clamp M.E."/>
            <person name="Bethel G."/>
            <person name="Milne S."/>
            <person name="Ainscough R."/>
            <person name="Almeida J.P."/>
            <person name="Ambrose K.D."/>
            <person name="Andrews T.D."/>
            <person name="Ashwell R.I.S."/>
            <person name="Babbage A.K."/>
            <person name="Bagguley C.L."/>
            <person name="Bailey J."/>
            <person name="Banerjee R."/>
            <person name="Barker D.J."/>
            <person name="Barlow K.F."/>
            <person name="Bates K."/>
            <person name="Beare D.M."/>
            <person name="Beasley H."/>
            <person name="Beasley O."/>
            <person name="Bird C.P."/>
            <person name="Blakey S.E."/>
            <person name="Bray-Allen S."/>
            <person name="Brook J."/>
            <person name="Brown A.J."/>
            <person name="Brown J.Y."/>
            <person name="Burford D.C."/>
            <person name="Burrill W."/>
            <person name="Burton J."/>
            <person name="Carder C."/>
            <person name="Carter N.P."/>
            <person name="Chapman J.C."/>
            <person name="Clark S.Y."/>
            <person name="Clark G."/>
            <person name="Clee C.M."/>
            <person name="Clegg S."/>
            <person name="Cobley V."/>
            <person name="Collier R.E."/>
            <person name="Collins J.E."/>
            <person name="Colman L.K."/>
            <person name="Corby N.R."/>
            <person name="Coville G.J."/>
            <person name="Culley K.M."/>
            <person name="Dhami P."/>
            <person name="Davies J."/>
            <person name="Dunn M."/>
            <person name="Earthrowl M.E."/>
            <person name="Ellington A.E."/>
            <person name="Evans K.A."/>
            <person name="Faulkner L."/>
            <person name="Francis M.D."/>
            <person name="Frankish A."/>
            <person name="Frankland J."/>
            <person name="French L."/>
            <person name="Garner P."/>
            <person name="Garnett J."/>
            <person name="Ghori M.J."/>
            <person name="Gilby L.M."/>
            <person name="Gillson C.J."/>
            <person name="Glithero R.J."/>
            <person name="Grafham D.V."/>
            <person name="Grant M."/>
            <person name="Gribble S."/>
            <person name="Griffiths C."/>
            <person name="Griffiths M.N.D."/>
            <person name="Hall R."/>
            <person name="Halls K.S."/>
            <person name="Hammond S."/>
            <person name="Harley J.L."/>
            <person name="Hart E.A."/>
            <person name="Heath P.D."/>
            <person name="Heathcott R."/>
            <person name="Holmes S.J."/>
            <person name="Howden P.J."/>
            <person name="Howe K.L."/>
            <person name="Howell G.R."/>
            <person name="Huckle E."/>
            <person name="Humphray S.J."/>
            <person name="Humphries M.D."/>
            <person name="Hunt A.R."/>
            <person name="Johnson C.M."/>
            <person name="Joy A.A."/>
            <person name="Kay M."/>
            <person name="Keenan S.J."/>
            <person name="Kimberley A.M."/>
            <person name="King A."/>
            <person name="Laird G.K."/>
            <person name="Langford C."/>
            <person name="Lawlor S."/>
            <person name="Leongamornlert D.A."/>
            <person name="Leversha M."/>
            <person name="Lloyd C.R."/>
            <person name="Lloyd D.M."/>
            <person name="Loveland J.E."/>
            <person name="Lovell J."/>
            <person name="Martin S."/>
            <person name="Mashreghi-Mohammadi M."/>
            <person name="Maslen G.L."/>
            <person name="Matthews L."/>
            <person name="McCann O.T."/>
            <person name="McLaren S.J."/>
            <person name="McLay K."/>
            <person name="McMurray A."/>
            <person name="Moore M.J.F."/>
            <person name="Mullikin J.C."/>
            <person name="Niblett D."/>
            <person name="Nickerson T."/>
            <person name="Novik K.L."/>
            <person name="Oliver K."/>
            <person name="Overton-Larty E.K."/>
            <person name="Parker A."/>
            <person name="Patel R."/>
            <person name="Pearce A.V."/>
            <person name="Peck A.I."/>
            <person name="Phillimore B.J.C.T."/>
            <person name="Phillips S."/>
            <person name="Plumb R.W."/>
            <person name="Porter K.M."/>
            <person name="Ramsey Y."/>
            <person name="Ranby S.A."/>
            <person name="Rice C.M."/>
            <person name="Ross M.T."/>
            <person name="Searle S.M."/>
            <person name="Sehra H.K."/>
            <person name="Sheridan E."/>
            <person name="Skuce C.D."/>
            <person name="Smith S."/>
            <person name="Smith M."/>
            <person name="Spraggon L."/>
            <person name="Squares S.L."/>
            <person name="Steward C.A."/>
            <person name="Sycamore N."/>
            <person name="Tamlyn-Hall G."/>
            <person name="Tester J."/>
            <person name="Theaker A.J."/>
            <person name="Thomas D.W."/>
            <person name="Thorpe A."/>
            <person name="Tracey A."/>
            <person name="Tromans A."/>
            <person name="Tubby B."/>
            <person name="Wall M."/>
            <person name="Wallis J.M."/>
            <person name="West A.P."/>
            <person name="White S.S."/>
            <person name="Whitehead S.L."/>
            <person name="Whittaker H."/>
            <person name="Wild A."/>
            <person name="Willey D.J."/>
            <person name="Wilmer T.E."/>
            <person name="Wood J.M."/>
            <person name="Wray P.W."/>
            <person name="Wyatt J.C."/>
            <person name="Young L."/>
            <person name="Younger R.M."/>
            <person name="Bentley D.R."/>
            <person name="Coulson A."/>
            <person name="Durbin R.M."/>
            <person name="Hubbard T."/>
            <person name="Sulston J.E."/>
            <person name="Dunham I."/>
            <person name="Rogers J."/>
            <person name="Beck S."/>
        </authorList>
    </citation>
    <scope>NUCLEOTIDE SEQUENCE [LARGE SCALE GENOMIC DNA]</scope>
</reference>
<reference key="4">
    <citation type="submission" date="2005-07" db="EMBL/GenBank/DDBJ databases">
        <authorList>
            <person name="Mural R.J."/>
            <person name="Istrail S."/>
            <person name="Sutton G.G."/>
            <person name="Florea L."/>
            <person name="Halpern A.L."/>
            <person name="Mobarry C.M."/>
            <person name="Lippert R."/>
            <person name="Walenz B."/>
            <person name="Shatkay H."/>
            <person name="Dew I."/>
            <person name="Miller J.R."/>
            <person name="Flanigan M.J."/>
            <person name="Edwards N.J."/>
            <person name="Bolanos R."/>
            <person name="Fasulo D."/>
            <person name="Halldorsson B.V."/>
            <person name="Hannenhalli S."/>
            <person name="Turner R."/>
            <person name="Yooseph S."/>
            <person name="Lu F."/>
            <person name="Nusskern D.R."/>
            <person name="Shue B.C."/>
            <person name="Zheng X.H."/>
            <person name="Zhong F."/>
            <person name="Delcher A.L."/>
            <person name="Huson D.H."/>
            <person name="Kravitz S.A."/>
            <person name="Mouchard L."/>
            <person name="Reinert K."/>
            <person name="Remington K.A."/>
            <person name="Clark A.G."/>
            <person name="Waterman M.S."/>
            <person name="Eichler E.E."/>
            <person name="Adams M.D."/>
            <person name="Hunkapiller M.W."/>
            <person name="Myers E.W."/>
            <person name="Venter J.C."/>
        </authorList>
    </citation>
    <scope>NUCLEOTIDE SEQUENCE [LARGE SCALE GENOMIC DNA]</scope>
    <scope>VARIANT SER-694</scope>
</reference>
<reference key="5">
    <citation type="journal article" date="2004" name="Genome Res.">
        <title>The status, quality, and expansion of the NIH full-length cDNA project: the Mammalian Gene Collection (MGC).</title>
        <authorList>
            <consortium name="The MGC Project Team"/>
        </authorList>
    </citation>
    <scope>NUCLEOTIDE SEQUENCE [LARGE SCALE MRNA] (ISOFORM 1)</scope>
    <scope>VARIANT SER-694</scope>
</reference>
<reference key="6">
    <citation type="journal article" date="2002" name="Oncogene">
        <title>Cloning of a novel phosphotyrosine binding domain containing molecule, Odin, involved in signaling by receptor tyrosine kinases.</title>
        <authorList>
            <person name="Pandey A."/>
            <person name="Blagoev B."/>
            <person name="Kratchmarova I."/>
            <person name="Fernandez M."/>
            <person name="Nielsen M."/>
            <person name="Kristiansen T.Z."/>
            <person name="Ohara O."/>
            <person name="Podtelejnikov A.V."/>
            <person name="Roche S."/>
            <person name="Lodish H.F."/>
            <person name="Mann M."/>
        </authorList>
    </citation>
    <scope>PROTEIN SEQUENCE OF 540-564</scope>
    <scope>ACETYLATION AT GLY-2</scope>
    <scope>IDENTIFICATION BY MASS SPECTROMETRY</scope>
    <scope>CHARACTERIZATION</scope>
    <source>
        <tissue>Cervix carcinoma</tissue>
    </source>
</reference>
<reference key="7">
    <citation type="journal article" date="2007" name="Mol. Cell. Biol.">
        <title>Identification of phosphotyrosine binding domain-containing proteins as novel downstream targets of the EphA8 signaling function.</title>
        <authorList>
            <person name="Shin J."/>
            <person name="Gu C."/>
            <person name="Park E."/>
            <person name="Park S."/>
        </authorList>
    </citation>
    <scope>FUNCTION IN EFNA5-EPHA8 SIGNALING PATHWAY</scope>
</reference>
<reference key="8">
    <citation type="journal article" date="2008" name="J. Proteome Res.">
        <title>Phosphoproteome of resting human platelets.</title>
        <authorList>
            <person name="Zahedi R.P."/>
            <person name="Lewandrowski U."/>
            <person name="Wiesner J."/>
            <person name="Wortelkamp S."/>
            <person name="Moebius J."/>
            <person name="Schuetz C."/>
            <person name="Walter U."/>
            <person name="Gambaryan S."/>
            <person name="Sickmann A."/>
        </authorList>
    </citation>
    <scope>IDENTIFICATION BY MASS SPECTROMETRY [LARGE SCALE ANALYSIS]</scope>
    <source>
        <tissue>Platelet</tissue>
    </source>
</reference>
<reference key="9">
    <citation type="journal article" date="2008" name="Proc. Natl. Acad. Sci. U.S.A.">
        <title>A quantitative atlas of mitotic phosphorylation.</title>
        <authorList>
            <person name="Dephoure N."/>
            <person name="Zhou C."/>
            <person name="Villen J."/>
            <person name="Beausoleil S.A."/>
            <person name="Bakalarski C.E."/>
            <person name="Elledge S.J."/>
            <person name="Gygi S.P."/>
        </authorList>
    </citation>
    <scope>PHOSPHORYLATION [LARGE SCALE ANALYSIS] AT THR-318; SER-622; SER-647 AND SER-661</scope>
    <scope>IDENTIFICATION BY MASS SPECTROMETRY [LARGE SCALE ANALYSIS]</scope>
    <source>
        <tissue>Cervix carcinoma</tissue>
    </source>
</reference>
<reference key="10">
    <citation type="journal article" date="2009" name="Anal. Chem.">
        <title>Lys-N and trypsin cover complementary parts of the phosphoproteome in a refined SCX-based approach.</title>
        <authorList>
            <person name="Gauci S."/>
            <person name="Helbig A.O."/>
            <person name="Slijper M."/>
            <person name="Krijgsveld J."/>
            <person name="Heck A.J."/>
            <person name="Mohammed S."/>
        </authorList>
    </citation>
    <scope>IDENTIFICATION BY MASS SPECTROMETRY [LARGE SCALE ANALYSIS]</scope>
</reference>
<reference key="11">
    <citation type="journal article" date="2009" name="Sci. Signal.">
        <title>Quantitative phosphoproteomic analysis of T cell receptor signaling reveals system-wide modulation of protein-protein interactions.</title>
        <authorList>
            <person name="Mayya V."/>
            <person name="Lundgren D.H."/>
            <person name="Hwang S.-I."/>
            <person name="Rezaul K."/>
            <person name="Wu L."/>
            <person name="Eng J.K."/>
            <person name="Rodionov V."/>
            <person name="Han D.K."/>
        </authorList>
    </citation>
    <scope>PHOSPHORYLATION [LARGE SCALE ANALYSIS] AT SER-663</scope>
    <scope>VARIANT [LARGE SCALE ANALYSIS] SER-694</scope>
    <scope>IDENTIFICATION BY MASS SPECTROMETRY [LARGE SCALE ANALYSIS]</scope>
    <source>
        <tissue>Leukemic T-cell</tissue>
    </source>
</reference>
<reference key="12">
    <citation type="journal article" date="2010" name="Sci. Signal.">
        <title>Quantitative phosphoproteomics reveals widespread full phosphorylation site occupancy during mitosis.</title>
        <authorList>
            <person name="Olsen J.V."/>
            <person name="Vermeulen M."/>
            <person name="Santamaria A."/>
            <person name="Kumar C."/>
            <person name="Miller M.L."/>
            <person name="Jensen L.J."/>
            <person name="Gnad F."/>
            <person name="Cox J."/>
            <person name="Jensen T.S."/>
            <person name="Nigg E.A."/>
            <person name="Brunak S."/>
            <person name="Mann M."/>
        </authorList>
    </citation>
    <scope>PHOSPHORYLATION [LARGE SCALE ANALYSIS] AT SER-661 AND SER-663</scope>
    <scope>IDENTIFICATION BY MASS SPECTROMETRY [LARGE SCALE ANALYSIS]</scope>
    <source>
        <tissue>Cervix carcinoma</tissue>
    </source>
</reference>
<reference key="13">
    <citation type="journal article" date="2011" name="BMC Syst. Biol.">
        <title>Initial characterization of the human central proteome.</title>
        <authorList>
            <person name="Burkard T.R."/>
            <person name="Planyavsky M."/>
            <person name="Kaupe I."/>
            <person name="Breitwieser F.P."/>
            <person name="Buerckstuemmer T."/>
            <person name="Bennett K.L."/>
            <person name="Superti-Furga G."/>
            <person name="Colinge J."/>
        </authorList>
    </citation>
    <scope>IDENTIFICATION BY MASS SPECTROMETRY [LARGE SCALE ANALYSIS]</scope>
</reference>
<reference key="14">
    <citation type="journal article" date="2011" name="Sci. Signal.">
        <title>System-wide temporal characterization of the proteome and phosphoproteome of human embryonic stem cell differentiation.</title>
        <authorList>
            <person name="Rigbolt K.T."/>
            <person name="Prokhorova T.A."/>
            <person name="Akimov V."/>
            <person name="Henningsen J."/>
            <person name="Johansen P.T."/>
            <person name="Kratchmarova I."/>
            <person name="Kassem M."/>
            <person name="Mann M."/>
            <person name="Olsen J.V."/>
            <person name="Blagoev B."/>
        </authorList>
    </citation>
    <scope>PHOSPHORYLATION [LARGE SCALE ANALYSIS] AT SER-647; SER-661 AND SER-663</scope>
    <scope>IDENTIFICATION BY MASS SPECTROMETRY [LARGE SCALE ANALYSIS]</scope>
</reference>
<reference key="15">
    <citation type="journal article" date="2012" name="Proc. Natl. Acad. Sci. U.S.A.">
        <title>N-terminal acetylome analyses and functional insights of the N-terminal acetyltransferase NatB.</title>
        <authorList>
            <person name="Van Damme P."/>
            <person name="Lasa M."/>
            <person name="Polevoda B."/>
            <person name="Gazquez C."/>
            <person name="Elosegui-Artola A."/>
            <person name="Kim D.S."/>
            <person name="De Juan-Pardo E."/>
            <person name="Demeyer K."/>
            <person name="Hole K."/>
            <person name="Larrea E."/>
            <person name="Timmerman E."/>
            <person name="Prieto J."/>
            <person name="Arnesen T."/>
            <person name="Sherman F."/>
            <person name="Gevaert K."/>
            <person name="Aldabe R."/>
        </authorList>
    </citation>
    <scope>IDENTIFICATION BY MASS SPECTROMETRY [LARGE SCALE ANALYSIS]</scope>
</reference>
<reference key="16">
    <citation type="journal article" date="2013" name="J. Proteome Res.">
        <title>Toward a comprehensive characterization of a human cancer cell phosphoproteome.</title>
        <authorList>
            <person name="Zhou H."/>
            <person name="Di Palma S."/>
            <person name="Preisinger C."/>
            <person name="Peng M."/>
            <person name="Polat A.N."/>
            <person name="Heck A.J."/>
            <person name="Mohammed S."/>
        </authorList>
    </citation>
    <scope>PHOSPHORYLATION [LARGE SCALE ANALYSIS] AT THR-318; SER-620; SER-626; SER-647; SER-661; SER-663; SER-677 AND SER-887</scope>
    <scope>IDENTIFICATION BY MASS SPECTROMETRY [LARGE SCALE ANALYSIS]</scope>
    <source>
        <tissue>Cervix carcinoma</tissue>
        <tissue>Erythroleukemia</tissue>
    </source>
</reference>
<reference key="17">
    <citation type="journal article" date="2014" name="J. Proteomics">
        <title>An enzyme assisted RP-RPLC approach for in-depth analysis of human liver phosphoproteome.</title>
        <authorList>
            <person name="Bian Y."/>
            <person name="Song C."/>
            <person name="Cheng K."/>
            <person name="Dong M."/>
            <person name="Wang F."/>
            <person name="Huang J."/>
            <person name="Sun D."/>
            <person name="Wang L."/>
            <person name="Ye M."/>
            <person name="Zou H."/>
        </authorList>
    </citation>
    <scope>PHOSPHORYLATION [LARGE SCALE ANALYSIS] AT SER-507 AND SER-628</scope>
    <scope>IDENTIFICATION BY MASS SPECTROMETRY [LARGE SCALE ANALYSIS]</scope>
    <source>
        <tissue>Liver</tissue>
    </source>
</reference>
<reference key="18">
    <citation type="journal article" date="2012" name="Biochemistry">
        <title>Solution structure of the first Sam domain of Odin and binding studies with the EphA2 receptor.</title>
        <authorList>
            <person name="Mercurio F.A."/>
            <person name="Marasco D."/>
            <person name="Pirone L."/>
            <person name="Pedone E.M."/>
            <person name="Pellecchia M."/>
            <person name="Leone M."/>
        </authorList>
    </citation>
    <scope>STRUCTURE BY NMR OF 691-770</scope>
    <scope>INTERACTION WITH EPHA2</scope>
</reference>
<name>ANS1A_HUMAN</name>
<evidence type="ECO:0000250" key="1"/>
<evidence type="ECO:0000250" key="2">
    <source>
        <dbReference type="UniProtKB" id="P59672"/>
    </source>
</evidence>
<evidence type="ECO:0000255" key="3">
    <source>
        <dbReference type="PROSITE-ProRule" id="PRU00148"/>
    </source>
</evidence>
<evidence type="ECO:0000255" key="4">
    <source>
        <dbReference type="PROSITE-ProRule" id="PRU00184"/>
    </source>
</evidence>
<evidence type="ECO:0000256" key="5">
    <source>
        <dbReference type="SAM" id="MobiDB-lite"/>
    </source>
</evidence>
<evidence type="ECO:0000269" key="6">
    <source>
    </source>
</evidence>
<evidence type="ECO:0000269" key="7">
    <source>
    </source>
</evidence>
<evidence type="ECO:0000269" key="8">
    <source>
    </source>
</evidence>
<evidence type="ECO:0000269" key="9">
    <source>
    </source>
</evidence>
<evidence type="ECO:0000269" key="10">
    <source>
    </source>
</evidence>
<evidence type="ECO:0000269" key="11">
    <source ref="4"/>
</evidence>
<evidence type="ECO:0000303" key="12">
    <source>
    </source>
</evidence>
<evidence type="ECO:0000305" key="13"/>
<evidence type="ECO:0007744" key="14">
    <source>
    </source>
</evidence>
<evidence type="ECO:0007744" key="15">
    <source>
    </source>
</evidence>
<evidence type="ECO:0007744" key="16">
    <source>
    </source>
</evidence>
<evidence type="ECO:0007744" key="17">
    <source>
    </source>
</evidence>
<evidence type="ECO:0007744" key="18">
    <source>
    </source>
</evidence>
<evidence type="ECO:0007744" key="19">
    <source>
    </source>
</evidence>
<evidence type="ECO:0007829" key="20">
    <source>
        <dbReference type="PDB" id="2LMR"/>
    </source>
</evidence>
<sequence length="1134" mass="123108">MGKEQELLEAARTGHLPAVEKLLSGKRLSSGFGGGGGGGSGGGGGGSGGGGGGLGSSSHPLSSLLSMWRGPNVNCVDSTGYTPLHHAALNGHKDVVEVLLRNDALTNVADSKGCYPLHLAAWKGDAQIVRLLIHQGPSHTRVNEQNNDNETALHCAAQYGHTEVVKVLLEELTDPTMRNNKFETPLDLAALYGRLEVVKMLLNAHPNLLSCNTKKHTPLHLAARNGHKAVVQVLLDAGMDSNYQTEMGSALHEAALFGKTDVVQILLAAGTDVNIKDNHGLTALDTVRELPSQKSQQIAALIEDHMTGKRSTKEVDKTPPPQPPLISSMDSISQKSQGDVEKAVTELIIDFDANAEEEGPYEALYNAISCHSLDSMASGRSSDQDSTNKEAEAAGVKPAGVRPRERPPPPAKPPPDEEEEDHIDKKYFPLTASEVLSMRPRIHGSAAREEDEHPYELLLTAETKKVVLVDGKTKDHRRSSSSRSQDSAEGQDGQVPEQFSGLLHGSSPVCEVGQDPFQLLCTAGQSHPDGSPQQGACHKASMQLEETGVHAPGASQPSALDQSKRVGYLTGLPTTNSRSHPETLTHTASPHPGGAEEGDRSGARSRAPPTSKPKAELKLSRSLSKSDSDLLTCSPTEDATMGSRSESLSNCSIGKKRLEKSPSFASEWDEIEKIMSSIGEGIDFSQERQKISGLRTLEQSVGEWLESIGLQQYESKLLLNGFDDVHFLGSNVMEEQDLRDIGISDPQHRRKLLQAARSLPKVKALGYDGNSPPSVPSWLDSLGLQDYVHSFLSSGYSSIDTVKNLWELELVNVLKVQLLGHRKRIIASLADRPYEEPPQKPPRFSQLRCQDLLSQTSSPLSQNDSCTGRSADLLLPPGDTGRRRHDSLHDPAAPSRAERFRIQEEHREAKLTLRPPSLAAPYAPVQSWQHQPEKLIFESCGYEANYLGSMLIKDLRGTESTQDACAKMRKSTEHMKKIPTIILSITYKGVKFIDASNKNVIAEHEIRNISCAAQDPEDLCTFAYITKDLQTSHHYCHVFSTVDVNLTYEIILTLGQAFEVAYQLALQAQKSRATGASAAEMIETKSSKPVPKPRVGVRKSALEPPDMDQDAQSHASVSWVVDPKPDSKRSLSTN</sequence>
<comment type="function">
    <text evidence="1 8">Regulator of different signaling pathways. Regulates EPHA8 receptor tyrosine kinase signaling to control cell migration and neurite retraction (By similarity).</text>
</comment>
<comment type="subunit">
    <text evidence="2 9">Interacts (via SAM domain) with EPHA2 (via SAM domain) (PubMed:22332920). Interacts with EPHA8; EPHA8 kinase activity-independent but stimulated by EPHA8 ubiquitination. Interacts (via SAM domain) with EPHA6 (via SAM domain) (By similarity).</text>
</comment>
<comment type="interaction">
    <interactant intactId="EBI-1048612">
        <id>Q92625</id>
    </interactant>
    <interactant intactId="EBI-297353">
        <id>P00533</id>
        <label>EGFR</label>
    </interactant>
    <organismsDiffer>false</organismsDiffer>
    <experiments>7</experiments>
</comment>
<comment type="interaction">
    <interactant intactId="EBI-1048612">
        <id>Q92625</id>
    </interactant>
    <interactant intactId="EBI-641062">
        <id>P04626</id>
        <label>ERBB2</label>
    </interactant>
    <organismsDiffer>false</organismsDiffer>
    <experiments>2</experiments>
</comment>
<comment type="interaction">
    <interactant intactId="EBI-1048612">
        <id>Q92625</id>
    </interactant>
    <interactant intactId="EBI-476295">
        <id>P31947</id>
        <label>SFN</label>
    </interactant>
    <organismsDiffer>false</organismsDiffer>
    <experiments>4</experiments>
</comment>
<comment type="subcellular location">
    <subcellularLocation>
        <location>Cytoplasm</location>
    </subcellularLocation>
    <subcellularLocation>
        <location evidence="1">Cell projection</location>
    </subcellularLocation>
    <text>Cytoplasmic before and after growth factor treatment.</text>
</comment>
<comment type="alternative products">
    <event type="alternative splicing"/>
    <isoform>
        <id>Q92625-1</id>
        <name>1</name>
        <sequence type="displayed"/>
    </isoform>
    <isoform>
        <id>Q92625-2</id>
        <name>2</name>
        <sequence type="described" ref="VSP_056512 VSP_056513"/>
    </isoform>
</comment>
<comment type="tissue specificity">
    <text>Widely expressed (at protein level).</text>
</comment>
<comment type="PTM">
    <text evidence="1">Phosphorylated on tyrosine residues in response to EGF and PDGF.</text>
</comment>
<comment type="sequence caution" evidence="13">
    <conflict type="erroneous initiation">
        <sequence resource="EMBL-CDS" id="BAA13218"/>
    </conflict>
</comment>
<organism>
    <name type="scientific">Homo sapiens</name>
    <name type="common">Human</name>
    <dbReference type="NCBI Taxonomy" id="9606"/>
    <lineage>
        <taxon>Eukaryota</taxon>
        <taxon>Metazoa</taxon>
        <taxon>Chordata</taxon>
        <taxon>Craniata</taxon>
        <taxon>Vertebrata</taxon>
        <taxon>Euteleostomi</taxon>
        <taxon>Mammalia</taxon>
        <taxon>Eutheria</taxon>
        <taxon>Euarchontoglires</taxon>
        <taxon>Primates</taxon>
        <taxon>Haplorrhini</taxon>
        <taxon>Catarrhini</taxon>
        <taxon>Hominidae</taxon>
        <taxon>Homo</taxon>
    </lineage>
</organism>
<keyword id="KW-0002">3D-structure</keyword>
<keyword id="KW-0007">Acetylation</keyword>
<keyword id="KW-0025">Alternative splicing</keyword>
<keyword id="KW-0040">ANK repeat</keyword>
<keyword id="KW-0966">Cell projection</keyword>
<keyword id="KW-0963">Cytoplasm</keyword>
<keyword id="KW-0903">Direct protein sequencing</keyword>
<keyword id="KW-0597">Phosphoprotein</keyword>
<keyword id="KW-1267">Proteomics identification</keyword>
<keyword id="KW-1185">Reference proteome</keyword>
<keyword id="KW-0677">Repeat</keyword>
<feature type="initiator methionine" description="Removed" evidence="6">
    <location>
        <position position="1"/>
    </location>
</feature>
<feature type="chain" id="PRO_0000066921" description="Ankyrin repeat and SAM domain-containing protein 1A">
    <location>
        <begin position="2"/>
        <end position="1134"/>
    </location>
</feature>
<feature type="repeat" description="ANK 1">
    <location>
        <begin position="79"/>
        <end position="108"/>
    </location>
</feature>
<feature type="repeat" description="ANK 2">
    <location>
        <begin position="112"/>
        <end position="141"/>
    </location>
</feature>
<feature type="repeat" description="ANK 3">
    <location>
        <begin position="148"/>
        <end position="177"/>
    </location>
</feature>
<feature type="repeat" description="ANK 4">
    <location>
        <begin position="181"/>
        <end position="210"/>
    </location>
</feature>
<feature type="repeat" description="ANK 5">
    <location>
        <begin position="214"/>
        <end position="243"/>
    </location>
</feature>
<feature type="repeat" description="ANK 6">
    <location>
        <begin position="246"/>
        <end position="275"/>
    </location>
</feature>
<feature type="domain" description="SAM 1" evidence="4">
    <location>
        <begin position="696"/>
        <end position="762"/>
    </location>
</feature>
<feature type="domain" description="SAM 2" evidence="4">
    <location>
        <begin position="770"/>
        <end position="837"/>
    </location>
</feature>
<feature type="domain" description="PID" evidence="3">
    <location>
        <begin position="936"/>
        <end position="1091"/>
    </location>
</feature>
<feature type="region of interest" description="Disordered" evidence="5">
    <location>
        <begin position="33"/>
        <end position="57"/>
    </location>
</feature>
<feature type="region of interest" description="Disordered" evidence="5">
    <location>
        <begin position="305"/>
        <end position="338"/>
    </location>
</feature>
<feature type="region of interest" description="Disordered" evidence="5">
    <location>
        <begin position="375"/>
        <end position="422"/>
    </location>
</feature>
<feature type="region of interest" description="Disordered" evidence="5">
    <location>
        <begin position="469"/>
        <end position="498"/>
    </location>
</feature>
<feature type="region of interest" description="Disordered" evidence="5">
    <location>
        <begin position="569"/>
        <end position="650"/>
    </location>
</feature>
<feature type="region of interest" description="Disordered" evidence="5">
    <location>
        <begin position="856"/>
        <end position="896"/>
    </location>
</feature>
<feature type="region of interest" description="Disordered" evidence="5">
    <location>
        <begin position="1079"/>
        <end position="1134"/>
    </location>
</feature>
<feature type="compositionally biased region" description="Gly residues" evidence="5">
    <location>
        <begin position="33"/>
        <end position="55"/>
    </location>
</feature>
<feature type="compositionally biased region" description="Basic and acidic residues" evidence="5">
    <location>
        <begin position="305"/>
        <end position="317"/>
    </location>
</feature>
<feature type="compositionally biased region" description="Polar residues" evidence="5">
    <location>
        <begin position="328"/>
        <end position="337"/>
    </location>
</feature>
<feature type="compositionally biased region" description="Basic and acidic residues" evidence="5">
    <location>
        <begin position="382"/>
        <end position="392"/>
    </location>
</feature>
<feature type="compositionally biased region" description="Polar residues" evidence="5">
    <location>
        <begin position="572"/>
        <end position="588"/>
    </location>
</feature>
<feature type="compositionally biased region" description="Basic and acidic residues" evidence="5">
    <location>
        <begin position="613"/>
        <end position="628"/>
    </location>
</feature>
<feature type="compositionally biased region" description="Polar residues" evidence="5">
    <location>
        <begin position="633"/>
        <end position="650"/>
    </location>
</feature>
<feature type="compositionally biased region" description="Polar residues" evidence="5">
    <location>
        <begin position="856"/>
        <end position="868"/>
    </location>
</feature>
<feature type="compositionally biased region" description="Basic and acidic residues" evidence="5">
    <location>
        <begin position="1123"/>
        <end position="1134"/>
    </location>
</feature>
<feature type="modified residue" description="N-acetylglycine" evidence="6">
    <location>
        <position position="2"/>
    </location>
</feature>
<feature type="modified residue" description="Phosphothreonine" evidence="14 18">
    <location>
        <position position="318"/>
    </location>
</feature>
<feature type="modified residue" description="Phosphoserine" evidence="19">
    <location>
        <position position="507"/>
    </location>
</feature>
<feature type="modified residue" description="Phosphoserine" evidence="18">
    <location>
        <position position="620"/>
    </location>
</feature>
<feature type="modified residue" description="Phosphoserine" evidence="14">
    <location>
        <position position="622"/>
    </location>
</feature>
<feature type="modified residue" description="Phosphoserine" evidence="2">
    <location>
        <position position="624"/>
    </location>
</feature>
<feature type="modified residue" description="Phosphoserine" evidence="18">
    <location>
        <position position="626"/>
    </location>
</feature>
<feature type="modified residue" description="Phosphoserine" evidence="19">
    <location>
        <position position="628"/>
    </location>
</feature>
<feature type="modified residue" description="Phosphoserine" evidence="14 17 18">
    <location>
        <position position="647"/>
    </location>
</feature>
<feature type="modified residue" description="Phosphoserine" evidence="14 16 17 18">
    <location>
        <position position="661"/>
    </location>
</feature>
<feature type="modified residue" description="Phosphoserine" evidence="15 16 17 18">
    <location>
        <position position="663"/>
    </location>
</feature>
<feature type="modified residue" description="Phosphoserine" evidence="2">
    <location>
        <position position="666"/>
    </location>
</feature>
<feature type="modified residue" description="Phosphoserine" evidence="18">
    <location>
        <position position="677"/>
    </location>
</feature>
<feature type="modified residue" description="Phosphoserine" evidence="18">
    <location>
        <position position="887"/>
    </location>
</feature>
<feature type="splice variant" id="VSP_056512" description="In isoform 2." evidence="12">
    <original>HMTGKRSTKEVDKTPP</original>
    <variation>LDTLQFYFISCPFQGL</variation>
    <location>
        <begin position="305"/>
        <end position="320"/>
    </location>
</feature>
<feature type="splice variant" id="VSP_056513" description="In isoform 2." evidence="12">
    <location>
        <begin position="321"/>
        <end position="1134"/>
    </location>
</feature>
<feature type="sequence variant" id="VAR_048282" description="In dbSNP:rs6930932.">
    <original>A</original>
    <variation>D</variation>
    <location>
        <position position="355"/>
    </location>
</feature>
<feature type="sequence variant" id="VAR_021168" description="In dbSNP:rs820085." evidence="7 10 11 15">
    <original>L</original>
    <variation>S</variation>
    <location>
        <position position="694"/>
    </location>
</feature>
<feature type="helix" evidence="20">
    <location>
        <begin position="701"/>
        <end position="708"/>
    </location>
</feature>
<feature type="helix" evidence="20">
    <location>
        <begin position="711"/>
        <end position="713"/>
    </location>
</feature>
<feature type="helix" evidence="20">
    <location>
        <begin position="714"/>
        <end position="719"/>
    </location>
</feature>
<feature type="turn" evidence="20">
    <location>
        <begin position="728"/>
        <end position="730"/>
    </location>
</feature>
<feature type="helix" evidence="20">
    <location>
        <begin position="735"/>
        <end position="741"/>
    </location>
</feature>
<feature type="helix" evidence="20">
    <location>
        <begin position="746"/>
        <end position="757"/>
    </location>
</feature>
<feature type="strand" evidence="20">
    <location>
        <begin position="759"/>
        <end position="761"/>
    </location>
</feature>
<protein>
    <recommendedName>
        <fullName>Ankyrin repeat and SAM domain-containing protein 1A</fullName>
    </recommendedName>
    <alternativeName>
        <fullName>Odin</fullName>
    </alternativeName>
</protein>
<gene>
    <name type="primary">ANKS1A</name>
    <name type="synonym">ANKS1</name>
    <name type="synonym">KIAA0229</name>
    <name type="synonym">ODIN</name>
</gene>
<dbReference type="EMBL" id="D86982">
    <property type="protein sequence ID" value="BAA13218.1"/>
    <property type="status" value="ALT_INIT"/>
    <property type="molecule type" value="mRNA"/>
</dbReference>
<dbReference type="EMBL" id="AK298987">
    <property type="protein sequence ID" value="BAG61080.1"/>
    <property type="molecule type" value="mRNA"/>
</dbReference>
<dbReference type="EMBL" id="AL033520">
    <property type="status" value="NOT_ANNOTATED_CDS"/>
    <property type="molecule type" value="Genomic_DNA"/>
</dbReference>
<dbReference type="EMBL" id="AL138721">
    <property type="status" value="NOT_ANNOTATED_CDS"/>
    <property type="molecule type" value="Genomic_DNA"/>
</dbReference>
<dbReference type="EMBL" id="AL591002">
    <property type="status" value="NOT_ANNOTATED_CDS"/>
    <property type="molecule type" value="Genomic_DNA"/>
</dbReference>
<dbReference type="EMBL" id="CH471081">
    <property type="protein sequence ID" value="EAX03804.1"/>
    <property type="molecule type" value="Genomic_DNA"/>
</dbReference>
<dbReference type="EMBL" id="BC132832">
    <property type="protein sequence ID" value="AAI32833.1"/>
    <property type="molecule type" value="mRNA"/>
</dbReference>
<dbReference type="CCDS" id="CCDS4798.1">
    <molecule id="Q92625-1"/>
</dbReference>
<dbReference type="RefSeq" id="NP_056060.2">
    <molecule id="Q92625-1"/>
    <property type="nucleotide sequence ID" value="NM_015245.3"/>
</dbReference>
<dbReference type="PDB" id="2LMR">
    <property type="method" value="NMR"/>
    <property type="chains" value="A=691-770"/>
</dbReference>
<dbReference type="PDB" id="2MYQ">
    <property type="method" value="NMR"/>
    <property type="chains" value="A=715-757"/>
</dbReference>
<dbReference type="PDB" id="6F7O">
    <property type="method" value="NMR"/>
    <property type="chains" value="A=745-757"/>
</dbReference>
<dbReference type="PDBsum" id="2LMR"/>
<dbReference type="PDBsum" id="2MYQ"/>
<dbReference type="PDBsum" id="6F7O"/>
<dbReference type="BMRB" id="Q92625"/>
<dbReference type="SMR" id="Q92625"/>
<dbReference type="BioGRID" id="116889">
    <property type="interactions" value="173"/>
</dbReference>
<dbReference type="CORUM" id="Q92625"/>
<dbReference type="FunCoup" id="Q92625">
    <property type="interactions" value="2018"/>
</dbReference>
<dbReference type="IntAct" id="Q92625">
    <property type="interactions" value="53"/>
</dbReference>
<dbReference type="MINT" id="Q92625"/>
<dbReference type="STRING" id="9606.ENSP00000353518"/>
<dbReference type="GlyGen" id="Q92625">
    <property type="glycosylation" value="1 site, 1 O-linked glycan (1 site)"/>
</dbReference>
<dbReference type="iPTMnet" id="Q92625"/>
<dbReference type="MetOSite" id="Q92625"/>
<dbReference type="PhosphoSitePlus" id="Q92625"/>
<dbReference type="BioMuta" id="ANKS1A"/>
<dbReference type="DMDM" id="62511243"/>
<dbReference type="jPOST" id="Q92625"/>
<dbReference type="MassIVE" id="Q92625"/>
<dbReference type="PaxDb" id="9606-ENSP00000353518"/>
<dbReference type="PeptideAtlas" id="Q92625"/>
<dbReference type="ProteomicsDB" id="4910"/>
<dbReference type="ProteomicsDB" id="75380">
    <molecule id="Q92625-1"/>
</dbReference>
<dbReference type="Pumba" id="Q92625"/>
<dbReference type="Antibodypedia" id="29433">
    <property type="antibodies" value="103 antibodies from 19 providers"/>
</dbReference>
<dbReference type="DNASU" id="23294"/>
<dbReference type="Ensembl" id="ENST00000360359.5">
    <molecule id="Q92625-1"/>
    <property type="protein sequence ID" value="ENSP00000353518.3"/>
    <property type="gene ID" value="ENSG00000064999.16"/>
</dbReference>
<dbReference type="GeneID" id="23294"/>
<dbReference type="KEGG" id="hsa:23294"/>
<dbReference type="MANE-Select" id="ENST00000360359.5">
    <property type="protein sequence ID" value="ENSP00000353518.3"/>
    <property type="RefSeq nucleotide sequence ID" value="NM_015245.3"/>
    <property type="RefSeq protein sequence ID" value="NP_056060.2"/>
</dbReference>
<dbReference type="UCSC" id="uc003ojx.5">
    <molecule id="Q92625-1"/>
    <property type="organism name" value="human"/>
</dbReference>
<dbReference type="AGR" id="HGNC:20961"/>
<dbReference type="CTD" id="23294"/>
<dbReference type="DisGeNET" id="23294"/>
<dbReference type="GeneCards" id="ANKS1A"/>
<dbReference type="HGNC" id="HGNC:20961">
    <property type="gene designation" value="ANKS1A"/>
</dbReference>
<dbReference type="HPA" id="ENSG00000064999">
    <property type="expression patterns" value="Low tissue specificity"/>
</dbReference>
<dbReference type="MalaCards" id="ANKS1A"/>
<dbReference type="MIM" id="608994">
    <property type="type" value="gene"/>
</dbReference>
<dbReference type="neXtProt" id="NX_Q92625"/>
<dbReference type="OpenTargets" id="ENSG00000064999"/>
<dbReference type="PharmGKB" id="PA134958476"/>
<dbReference type="VEuPathDB" id="HostDB:ENSG00000064999"/>
<dbReference type="eggNOG" id="KOG0507">
    <property type="taxonomic scope" value="Eukaryota"/>
</dbReference>
<dbReference type="GeneTree" id="ENSGT00940000155806"/>
<dbReference type="HOGENOM" id="CLU_010379_0_0_1"/>
<dbReference type="InParanoid" id="Q92625"/>
<dbReference type="OrthoDB" id="10039052at2759"/>
<dbReference type="PAN-GO" id="Q92625">
    <property type="GO annotations" value="3 GO annotations based on evolutionary models"/>
</dbReference>
<dbReference type="PhylomeDB" id="Q92625"/>
<dbReference type="TreeFam" id="TF320582"/>
<dbReference type="PathwayCommons" id="Q92625"/>
<dbReference type="SignaLink" id="Q92625"/>
<dbReference type="BioGRID-ORCS" id="23294">
    <property type="hits" value="19 hits in 1159 CRISPR screens"/>
</dbReference>
<dbReference type="ChiTaRS" id="ANKS1A">
    <property type="organism name" value="human"/>
</dbReference>
<dbReference type="EvolutionaryTrace" id="Q92625"/>
<dbReference type="GeneWiki" id="ANKS1A"/>
<dbReference type="GenomeRNAi" id="23294"/>
<dbReference type="Pharos" id="Q92625">
    <property type="development level" value="Tbio"/>
</dbReference>
<dbReference type="PRO" id="PR:Q92625"/>
<dbReference type="Proteomes" id="UP000005640">
    <property type="component" value="Chromosome 6"/>
</dbReference>
<dbReference type="RNAct" id="Q92625">
    <property type="molecule type" value="protein"/>
</dbReference>
<dbReference type="Bgee" id="ENSG00000064999">
    <property type="expression patterns" value="Expressed in olfactory bulb and 206 other cell types or tissues"/>
</dbReference>
<dbReference type="ExpressionAtlas" id="Q92625">
    <property type="expression patterns" value="baseline and differential"/>
</dbReference>
<dbReference type="GO" id="GO:0005829">
    <property type="term" value="C:cytosol"/>
    <property type="evidence" value="ECO:0000314"/>
    <property type="project" value="HPA"/>
</dbReference>
<dbReference type="GO" id="GO:0043005">
    <property type="term" value="C:neuron projection"/>
    <property type="evidence" value="ECO:0000250"/>
    <property type="project" value="UniProtKB"/>
</dbReference>
<dbReference type="GO" id="GO:0005654">
    <property type="term" value="C:nucleoplasm"/>
    <property type="evidence" value="ECO:0000314"/>
    <property type="project" value="HPA"/>
</dbReference>
<dbReference type="GO" id="GO:0046875">
    <property type="term" value="F:ephrin receptor binding"/>
    <property type="evidence" value="ECO:0000318"/>
    <property type="project" value="GO_Central"/>
</dbReference>
<dbReference type="GO" id="GO:0048013">
    <property type="term" value="P:ephrin receptor signaling pathway"/>
    <property type="evidence" value="ECO:0000250"/>
    <property type="project" value="UniProtKB"/>
</dbReference>
<dbReference type="GO" id="GO:0016322">
    <property type="term" value="P:neuron remodeling"/>
    <property type="evidence" value="ECO:0000250"/>
    <property type="project" value="UniProtKB"/>
</dbReference>
<dbReference type="GO" id="GO:0006929">
    <property type="term" value="P:substrate-dependent cell migration"/>
    <property type="evidence" value="ECO:0000250"/>
    <property type="project" value="UniProtKB"/>
</dbReference>
<dbReference type="CDD" id="cd01274">
    <property type="entry name" value="PTB_Anks"/>
    <property type="match status" value="1"/>
</dbReference>
<dbReference type="CDD" id="cd09499">
    <property type="entry name" value="SAM_AIDA1AB-like_repeat1"/>
    <property type="match status" value="1"/>
</dbReference>
<dbReference type="CDD" id="cd09500">
    <property type="entry name" value="SAM_AIDA1AB-like_repeat2"/>
    <property type="match status" value="1"/>
</dbReference>
<dbReference type="FunFam" id="1.25.40.20:FF:000304">
    <property type="entry name" value="Ankyrin repeat and sterile alpha motif domain containing 1A"/>
    <property type="match status" value="1"/>
</dbReference>
<dbReference type="FunFam" id="2.30.29.30:FF:000045">
    <property type="entry name" value="Ankyrin repeat and sterile alpha motif domain-containing protein 1B"/>
    <property type="match status" value="1"/>
</dbReference>
<dbReference type="FunFam" id="1.10.150.50:FF:000015">
    <property type="entry name" value="ankyrin repeat and sterile alpha motif domain-containing protein 1B"/>
    <property type="match status" value="1"/>
</dbReference>
<dbReference type="FunFam" id="1.25.40.20:FF:000099">
    <property type="entry name" value="ankyrin repeat and sterile alpha motif domain-containing protein 1B isoform X5"/>
    <property type="match status" value="1"/>
</dbReference>
<dbReference type="Gene3D" id="1.25.40.20">
    <property type="entry name" value="Ankyrin repeat-containing domain"/>
    <property type="match status" value="3"/>
</dbReference>
<dbReference type="Gene3D" id="2.30.29.30">
    <property type="entry name" value="Pleckstrin-homology domain (PH domain)/Phosphotyrosine-binding domain (PTB)"/>
    <property type="match status" value="1"/>
</dbReference>
<dbReference type="Gene3D" id="1.10.150.50">
    <property type="entry name" value="Transcription Factor, Ets-1"/>
    <property type="match status" value="2"/>
</dbReference>
<dbReference type="InterPro" id="IPR033635">
    <property type="entry name" value="ANKS1/Caskin"/>
</dbReference>
<dbReference type="InterPro" id="IPR002110">
    <property type="entry name" value="Ankyrin_rpt"/>
</dbReference>
<dbReference type="InterPro" id="IPR036770">
    <property type="entry name" value="Ankyrin_rpt-contain_sf"/>
</dbReference>
<dbReference type="InterPro" id="IPR011993">
    <property type="entry name" value="PH-like_dom_sf"/>
</dbReference>
<dbReference type="InterPro" id="IPR006020">
    <property type="entry name" value="PTB/PI_dom"/>
</dbReference>
<dbReference type="InterPro" id="IPR001660">
    <property type="entry name" value="SAM"/>
</dbReference>
<dbReference type="InterPro" id="IPR013761">
    <property type="entry name" value="SAM/pointed_sf"/>
</dbReference>
<dbReference type="InterPro" id="IPR041880">
    <property type="entry name" value="SAM_ANKS1_repeat1"/>
</dbReference>
<dbReference type="InterPro" id="IPR041882">
    <property type="entry name" value="SAM_ANKS1_repeat2"/>
</dbReference>
<dbReference type="PANTHER" id="PTHR24174:SF4">
    <property type="entry name" value="ANKYRIN REPEAT AND SAM DOMAIN-CONTAINING PROTEIN 1A"/>
    <property type="match status" value="1"/>
</dbReference>
<dbReference type="PANTHER" id="PTHR24174">
    <property type="entry name" value="ANKYRIN REPEAT AND STERILE ALPHA MOTIF DOMAIN-CONTAINING PROTEIN 1"/>
    <property type="match status" value="1"/>
</dbReference>
<dbReference type="Pfam" id="PF12796">
    <property type="entry name" value="Ank_2"/>
    <property type="match status" value="3"/>
</dbReference>
<dbReference type="Pfam" id="PF00640">
    <property type="entry name" value="PID"/>
    <property type="match status" value="1"/>
</dbReference>
<dbReference type="Pfam" id="PF00536">
    <property type="entry name" value="SAM_1"/>
    <property type="match status" value="2"/>
</dbReference>
<dbReference type="PRINTS" id="PR01415">
    <property type="entry name" value="ANKYRIN"/>
</dbReference>
<dbReference type="SMART" id="SM00248">
    <property type="entry name" value="ANK"/>
    <property type="match status" value="6"/>
</dbReference>
<dbReference type="SMART" id="SM00462">
    <property type="entry name" value="PTB"/>
    <property type="match status" value="1"/>
</dbReference>
<dbReference type="SMART" id="SM00454">
    <property type="entry name" value="SAM"/>
    <property type="match status" value="2"/>
</dbReference>
<dbReference type="SUPFAM" id="SSF48403">
    <property type="entry name" value="Ankyrin repeat"/>
    <property type="match status" value="1"/>
</dbReference>
<dbReference type="SUPFAM" id="SSF50729">
    <property type="entry name" value="PH domain-like"/>
    <property type="match status" value="1"/>
</dbReference>
<dbReference type="SUPFAM" id="SSF47769">
    <property type="entry name" value="SAM/Pointed domain"/>
    <property type="match status" value="2"/>
</dbReference>
<dbReference type="PROSITE" id="PS50297">
    <property type="entry name" value="ANK_REP_REGION"/>
    <property type="match status" value="1"/>
</dbReference>
<dbReference type="PROSITE" id="PS50088">
    <property type="entry name" value="ANK_REPEAT"/>
    <property type="match status" value="6"/>
</dbReference>
<dbReference type="PROSITE" id="PS01179">
    <property type="entry name" value="PID"/>
    <property type="match status" value="1"/>
</dbReference>
<dbReference type="PROSITE" id="PS50105">
    <property type="entry name" value="SAM_DOMAIN"/>
    <property type="match status" value="2"/>
</dbReference>
<proteinExistence type="evidence at protein level"/>
<accession>Q92625</accession>
<accession>A2RUC1</accession>
<accession>B4DQW8</accession>
<accession>Q5JYI9</accession>
<accession>Q5SYR2</accession>
<accession>Q86WQ7</accession>